<proteinExistence type="evidence at transcript level"/>
<comment type="function">
    <text evidence="2 3">Probable core component of cullin-based SCF-like E3 ubiquitin-protein ligase complexes which mediate the ubiquitination and subsequent proteasomal degradation of target proteins (By similarity). The E3 ubiquitin-protein ligase activity of the complex is dependent on the neddylation of the cullin subunit (By similarity). Involved in ER-Golgi transport by regulating the size of COPII coats, thereby playing a key role in collagen export, which is required for embryonic stem (ES) cells division (By similarity). May play a role in the regulation of mittotic entry via ubiquitination of aurka (By similarity).</text>
</comment>
<comment type="pathway">
    <text>Protein modification; protein ubiquitination.</text>
</comment>
<comment type="subunit">
    <text evidence="2 3">Component of multiple BCR (BTB-CUL3-RBX1) E3 ubiquitin-protein ligase complexes formed of cul3, rbx1 and a variable BTB domain-containing protein acting as both, adapter to cullin and substrate recognition subunit (By similarity). Interacts with btbd6 (By similarity).</text>
</comment>
<comment type="subcellular location">
    <subcellularLocation>
        <location evidence="2">Nucleus</location>
    </subcellularLocation>
</comment>
<comment type="PTM">
    <text evidence="2">Neddylated. Attachment of NEDD8 is required for the E3 ubiquitin-protein ligase activity of the SCF-like complex.</text>
</comment>
<comment type="similarity">
    <text evidence="5">Belongs to the cullin family.</text>
</comment>
<protein>
    <recommendedName>
        <fullName>Cullin-3</fullName>
        <shortName>CUL-3</shortName>
    </recommendedName>
</protein>
<keyword id="KW-0131">Cell cycle</keyword>
<keyword id="KW-0132">Cell division</keyword>
<keyword id="KW-0931">ER-Golgi transport</keyword>
<keyword id="KW-1017">Isopeptide bond</keyword>
<keyword id="KW-0498">Mitosis</keyword>
<keyword id="KW-0539">Nucleus</keyword>
<keyword id="KW-1185">Reference proteome</keyword>
<keyword id="KW-0813">Transport</keyword>
<keyword id="KW-0832">Ubl conjugation</keyword>
<accession>A4IHP4</accession>
<reference key="1">
    <citation type="submission" date="2007-03" db="EMBL/GenBank/DDBJ databases">
        <authorList>
            <consortium name="NIH - Xenopus Gene Collection (XGC) project"/>
        </authorList>
    </citation>
    <scope>NUCLEOTIDE SEQUENCE [LARGE SCALE MRNA]</scope>
    <source>
        <tissue>Embryo</tissue>
    </source>
</reference>
<evidence type="ECO:0000250" key="1">
    <source>
        <dbReference type="UniProtKB" id="Q13616"/>
    </source>
</evidence>
<evidence type="ECO:0000250" key="2">
    <source>
        <dbReference type="UniProtKB" id="Q13618"/>
    </source>
</evidence>
<evidence type="ECO:0000250" key="3">
    <source>
        <dbReference type="UniProtKB" id="Q9JLV5"/>
    </source>
</evidence>
<evidence type="ECO:0000255" key="4"/>
<evidence type="ECO:0000255" key="5">
    <source>
        <dbReference type="PROSITE-ProRule" id="PRU00330"/>
    </source>
</evidence>
<evidence type="ECO:0000256" key="6">
    <source>
        <dbReference type="SAM" id="MobiDB-lite"/>
    </source>
</evidence>
<organism>
    <name type="scientific">Xenopus tropicalis</name>
    <name type="common">Western clawed frog</name>
    <name type="synonym">Silurana tropicalis</name>
    <dbReference type="NCBI Taxonomy" id="8364"/>
    <lineage>
        <taxon>Eukaryota</taxon>
        <taxon>Metazoa</taxon>
        <taxon>Chordata</taxon>
        <taxon>Craniata</taxon>
        <taxon>Vertebrata</taxon>
        <taxon>Euteleostomi</taxon>
        <taxon>Amphibia</taxon>
        <taxon>Batrachia</taxon>
        <taxon>Anura</taxon>
        <taxon>Pipoidea</taxon>
        <taxon>Pipidae</taxon>
        <taxon>Xenopodinae</taxon>
        <taxon>Xenopus</taxon>
        <taxon>Silurana</taxon>
    </lineage>
</organism>
<name>CUL3_XENTR</name>
<gene>
    <name type="primary">cul3</name>
</gene>
<feature type="chain" id="PRO_0000380254" description="Cullin-3">
    <location>
        <begin position="1"/>
        <end position="768"/>
    </location>
</feature>
<feature type="domain" description="Cullin neddylation" evidence="4">
    <location>
        <begin position="698"/>
        <end position="760"/>
    </location>
</feature>
<feature type="region of interest" description="Disordered" evidence="6">
    <location>
        <begin position="677"/>
        <end position="698"/>
    </location>
</feature>
<feature type="compositionally biased region" description="Basic and acidic residues" evidence="6">
    <location>
        <begin position="682"/>
        <end position="698"/>
    </location>
</feature>
<feature type="cross-link" description="Glycyl lysine isopeptide (Lys-Gly) (interchain with G-Cter in NEDD8)" evidence="1">
    <location>
        <position position="712"/>
    </location>
</feature>
<sequence length="768" mass="88965">MSNLGKSTGSRKDTKMRIRAFPMTMDEKYVNSIWDLLKNAIQEIQRKNNSGLSFEELYRNAYTMVLHKHGEKLYTGLREVVTEHLINKVREDVLNSLNNNFLQTLNQAWNDHQTAMVMIRDILMYMDRVYVQQNNVENVYNLGLIIFRDQVVRYGCIRDHLRQTLLDMIARERKGEVVDRGAIRNACQMLMILGLEGRSVYEEDFEAPFLEMSAEFFQMESQKFLAENSASVYIKKVEARINEEIERVMHCLDKSTEEPIVKVVERELISKHMKTIVEMENSGLVHMLKNGKTEDLACMYKLFSRVPNGLKTMCECMSLYLREQGKALVSEEGEGKNPVDYIQGLLDLKSRFDRFLQESFSNDRLFKQTIAGDFEYFLNLNSRSPEYLSLFIDDKLKKGVKGLTEQEVESILDKAMVLFRFMQEKDVFERYYKQHLARRLLTNKSVSDDSEKNMISKLKTECGCQFTSKLEGMFRDMSISNTTMDEFRQHLQTTGVSLGGVDLTVRVLTTGYWPTQSATPKCNIPPAPRHAFEIFRRFYLAKHSGRQLTLQHHMGSADLNATFYGPVKKEDGSEVGVGGAQVTGSNTRKHILQVSTFQMTILMLFNNREKYTFEEIQQETDIPERELVRALQSLACGKPTQRVLTKEPKSKEIESGHMFTVNDQFTSKLHRVKIQTVAAKQGESDPERKETRQKVDDDRKHEIEAAIVRIMKSRKKMQHNVLVAEVTQQLKARFLPSPVVIKKRIEGLIEREYLARTPEDRKVYTYVA</sequence>
<dbReference type="EMBL" id="BC135616">
    <property type="protein sequence ID" value="AAI35617.1"/>
    <property type="molecule type" value="mRNA"/>
</dbReference>
<dbReference type="RefSeq" id="NP_001015975.2">
    <property type="nucleotide sequence ID" value="NM_001015975.3"/>
</dbReference>
<dbReference type="SMR" id="A4IHP4"/>
<dbReference type="FunCoup" id="A4IHP4">
    <property type="interactions" value="3539"/>
</dbReference>
<dbReference type="STRING" id="8364.ENSXETP00000020164"/>
<dbReference type="PaxDb" id="8364-ENSXETP00000017945"/>
<dbReference type="DNASU" id="548729"/>
<dbReference type="GeneID" id="548729"/>
<dbReference type="KEGG" id="xtr:548729"/>
<dbReference type="AGR" id="Xenbase:XB-GENE-974982"/>
<dbReference type="CTD" id="8452"/>
<dbReference type="Xenbase" id="XB-GENE-974982">
    <property type="gene designation" value="cul3"/>
</dbReference>
<dbReference type="eggNOG" id="KOG2166">
    <property type="taxonomic scope" value="Eukaryota"/>
</dbReference>
<dbReference type="HOGENOM" id="CLU_004747_7_1_1"/>
<dbReference type="InParanoid" id="A4IHP4"/>
<dbReference type="OMA" id="MFKDMTI"/>
<dbReference type="OrthoDB" id="27073at2759"/>
<dbReference type="PhylomeDB" id="A4IHP4"/>
<dbReference type="Reactome" id="R-XTR-4641258">
    <property type="pathway name" value="Degradation of DVL"/>
</dbReference>
<dbReference type="Reactome" id="R-XTR-5632684">
    <property type="pathway name" value="Hedgehog 'on' state"/>
</dbReference>
<dbReference type="Reactome" id="R-XTR-8951664">
    <property type="pathway name" value="Neddylation"/>
</dbReference>
<dbReference type="Reactome" id="R-XTR-9013418">
    <property type="pathway name" value="RHOBTB2 GTPase cycle"/>
</dbReference>
<dbReference type="Reactome" id="R-XTR-9013422">
    <property type="pathway name" value="RHOBTB1 GTPase cycle"/>
</dbReference>
<dbReference type="Reactome" id="R-XTR-9755511">
    <property type="pathway name" value="KEAP1-NFE2L2 pathway"/>
</dbReference>
<dbReference type="Reactome" id="R-XTR-983168">
    <property type="pathway name" value="Antigen processing: Ubiquitination &amp; Proteasome degradation"/>
</dbReference>
<dbReference type="UniPathway" id="UPA00143"/>
<dbReference type="Proteomes" id="UP000008143">
    <property type="component" value="Chromosome 5"/>
</dbReference>
<dbReference type="Bgee" id="ENSXETG00000008183">
    <property type="expression patterns" value="Expressed in skeletal muscle tissue and 14 other cell types or tissues"/>
</dbReference>
<dbReference type="ExpressionAtlas" id="A4IHP4">
    <property type="expression patterns" value="baseline"/>
</dbReference>
<dbReference type="GO" id="GO:0005813">
    <property type="term" value="C:centrosome"/>
    <property type="evidence" value="ECO:0000250"/>
    <property type="project" value="UniProtKB"/>
</dbReference>
<dbReference type="GO" id="GO:0031463">
    <property type="term" value="C:Cul3-RING ubiquitin ligase complex"/>
    <property type="evidence" value="ECO:0000250"/>
    <property type="project" value="UniProtKB"/>
</dbReference>
<dbReference type="GO" id="GO:0005737">
    <property type="term" value="C:cytoplasm"/>
    <property type="evidence" value="ECO:0007669"/>
    <property type="project" value="GOC"/>
</dbReference>
<dbReference type="GO" id="GO:0072686">
    <property type="term" value="C:mitotic spindle"/>
    <property type="evidence" value="ECO:0000250"/>
    <property type="project" value="UniProtKB"/>
</dbReference>
<dbReference type="GO" id="GO:0005634">
    <property type="term" value="C:nucleus"/>
    <property type="evidence" value="ECO:0000250"/>
    <property type="project" value="UniProtKB"/>
</dbReference>
<dbReference type="GO" id="GO:0005827">
    <property type="term" value="C:polar microtubule"/>
    <property type="evidence" value="ECO:0000250"/>
    <property type="project" value="UniProtKB"/>
</dbReference>
<dbReference type="GO" id="GO:0000922">
    <property type="term" value="C:spindle pole"/>
    <property type="evidence" value="ECO:0000250"/>
    <property type="project" value="UniProtKB"/>
</dbReference>
<dbReference type="GO" id="GO:0031625">
    <property type="term" value="F:ubiquitin protein ligase binding"/>
    <property type="evidence" value="ECO:0007669"/>
    <property type="project" value="InterPro"/>
</dbReference>
<dbReference type="GO" id="GO:0016477">
    <property type="term" value="P:cell migration"/>
    <property type="evidence" value="ECO:0000250"/>
    <property type="project" value="UniProtKB"/>
</dbReference>
<dbReference type="GO" id="GO:0048208">
    <property type="term" value="P:COPII vesicle coating"/>
    <property type="evidence" value="ECO:0000250"/>
    <property type="project" value="UniProtKB"/>
</dbReference>
<dbReference type="GO" id="GO:0040016">
    <property type="term" value="P:embryonic cleavage"/>
    <property type="evidence" value="ECO:0000250"/>
    <property type="project" value="UniProtKB"/>
</dbReference>
<dbReference type="GO" id="GO:0006888">
    <property type="term" value="P:endoplasmic reticulum to Golgi vesicle-mediated transport"/>
    <property type="evidence" value="ECO:0000250"/>
    <property type="project" value="UniProtKB"/>
</dbReference>
<dbReference type="GO" id="GO:0007229">
    <property type="term" value="P:integrin-mediated signaling pathway"/>
    <property type="evidence" value="ECO:0000250"/>
    <property type="project" value="UniProtKB"/>
</dbReference>
<dbReference type="GO" id="GO:0007080">
    <property type="term" value="P:mitotic metaphase chromosome alignment"/>
    <property type="evidence" value="ECO:0000250"/>
    <property type="project" value="UniProtKB"/>
</dbReference>
<dbReference type="GO" id="GO:0035024">
    <property type="term" value="P:negative regulation of Rho protein signal transduction"/>
    <property type="evidence" value="ECO:0000250"/>
    <property type="project" value="UniProtKB"/>
</dbReference>
<dbReference type="GO" id="GO:1901992">
    <property type="term" value="P:positive regulation of mitotic cell cycle phase transition"/>
    <property type="evidence" value="ECO:0000250"/>
    <property type="project" value="UniProtKB"/>
</dbReference>
<dbReference type="GO" id="GO:0045842">
    <property type="term" value="P:positive regulation of mitotic metaphase/anaphase transition"/>
    <property type="evidence" value="ECO:0000250"/>
    <property type="project" value="UniProtKB"/>
</dbReference>
<dbReference type="GO" id="GO:0043161">
    <property type="term" value="P:proteasome-mediated ubiquitin-dependent protein catabolic process"/>
    <property type="evidence" value="ECO:0000250"/>
    <property type="project" value="UniProtKB"/>
</dbReference>
<dbReference type="GO" id="GO:0006513">
    <property type="term" value="P:protein monoubiquitination"/>
    <property type="evidence" value="ECO:0000250"/>
    <property type="project" value="UniProtKB"/>
</dbReference>
<dbReference type="GO" id="GO:0016567">
    <property type="term" value="P:protein ubiquitination"/>
    <property type="evidence" value="ECO:0000250"/>
    <property type="project" value="UniProtKB"/>
</dbReference>
<dbReference type="GO" id="GO:0017145">
    <property type="term" value="P:stem cell division"/>
    <property type="evidence" value="ECO:0000250"/>
    <property type="project" value="UniProtKB"/>
</dbReference>
<dbReference type="GO" id="GO:0043149">
    <property type="term" value="P:stress fiber assembly"/>
    <property type="evidence" value="ECO:0000250"/>
    <property type="project" value="UniProtKB"/>
</dbReference>
<dbReference type="FunFam" id="1.10.10.10:FF:000091">
    <property type="entry name" value="Cullin 3"/>
    <property type="match status" value="1"/>
</dbReference>
<dbReference type="FunFam" id="1.20.1310.10:FF:000001">
    <property type="entry name" value="Cullin 3"/>
    <property type="match status" value="1"/>
</dbReference>
<dbReference type="FunFam" id="1.20.1310.10:FF:000005">
    <property type="entry name" value="Cullin 3"/>
    <property type="match status" value="1"/>
</dbReference>
<dbReference type="FunFam" id="1.20.1310.10:FF:000006">
    <property type="entry name" value="Cullin 3"/>
    <property type="match status" value="1"/>
</dbReference>
<dbReference type="FunFam" id="1.20.1310.10:FF:000002">
    <property type="entry name" value="cullin-3 isoform X1"/>
    <property type="match status" value="1"/>
</dbReference>
<dbReference type="FunFam" id="3.30.230.130:FF:000002">
    <property type="entry name" value="cullin-3 isoform X1"/>
    <property type="match status" value="1"/>
</dbReference>
<dbReference type="Gene3D" id="1.20.1310.10">
    <property type="entry name" value="Cullin Repeats"/>
    <property type="match status" value="4"/>
</dbReference>
<dbReference type="Gene3D" id="3.30.230.130">
    <property type="entry name" value="Cullin, Chain C, Domain 2"/>
    <property type="match status" value="1"/>
</dbReference>
<dbReference type="Gene3D" id="1.10.10.10">
    <property type="entry name" value="Winged helix-like DNA-binding domain superfamily/Winged helix DNA-binding domain"/>
    <property type="match status" value="1"/>
</dbReference>
<dbReference type="InterPro" id="IPR045093">
    <property type="entry name" value="Cullin"/>
</dbReference>
<dbReference type="InterPro" id="IPR016157">
    <property type="entry name" value="Cullin_CS"/>
</dbReference>
<dbReference type="InterPro" id="IPR016158">
    <property type="entry name" value="Cullin_homology"/>
</dbReference>
<dbReference type="InterPro" id="IPR036317">
    <property type="entry name" value="Cullin_homology_sf"/>
</dbReference>
<dbReference type="InterPro" id="IPR001373">
    <property type="entry name" value="Cullin_N"/>
</dbReference>
<dbReference type="InterPro" id="IPR019559">
    <property type="entry name" value="Cullin_neddylation_domain"/>
</dbReference>
<dbReference type="InterPro" id="IPR016159">
    <property type="entry name" value="Cullin_repeat-like_dom_sf"/>
</dbReference>
<dbReference type="InterPro" id="IPR036388">
    <property type="entry name" value="WH-like_DNA-bd_sf"/>
</dbReference>
<dbReference type="InterPro" id="IPR036390">
    <property type="entry name" value="WH_DNA-bd_sf"/>
</dbReference>
<dbReference type="PANTHER" id="PTHR11932">
    <property type="entry name" value="CULLIN"/>
    <property type="match status" value="1"/>
</dbReference>
<dbReference type="Pfam" id="PF00888">
    <property type="entry name" value="Cullin"/>
    <property type="match status" value="1"/>
</dbReference>
<dbReference type="Pfam" id="PF10557">
    <property type="entry name" value="Cullin_Nedd8"/>
    <property type="match status" value="1"/>
</dbReference>
<dbReference type="SMART" id="SM00182">
    <property type="entry name" value="CULLIN"/>
    <property type="match status" value="1"/>
</dbReference>
<dbReference type="SMART" id="SM00884">
    <property type="entry name" value="Cullin_Nedd8"/>
    <property type="match status" value="1"/>
</dbReference>
<dbReference type="SUPFAM" id="SSF75632">
    <property type="entry name" value="Cullin homology domain"/>
    <property type="match status" value="1"/>
</dbReference>
<dbReference type="SUPFAM" id="SSF74788">
    <property type="entry name" value="Cullin repeat-like"/>
    <property type="match status" value="1"/>
</dbReference>
<dbReference type="SUPFAM" id="SSF46785">
    <property type="entry name" value="Winged helix' DNA-binding domain"/>
    <property type="match status" value="1"/>
</dbReference>
<dbReference type="PROSITE" id="PS01256">
    <property type="entry name" value="CULLIN_1"/>
    <property type="match status" value="1"/>
</dbReference>
<dbReference type="PROSITE" id="PS50069">
    <property type="entry name" value="CULLIN_2"/>
    <property type="match status" value="1"/>
</dbReference>